<proteinExistence type="inferred from homology"/>
<dbReference type="EC" id="4.2.3.5" evidence="1"/>
<dbReference type="EMBL" id="AE002160">
    <property type="protein sequence ID" value="AAF39474.1"/>
    <property type="molecule type" value="Genomic_DNA"/>
</dbReference>
<dbReference type="PIR" id="F81679">
    <property type="entry name" value="F81679"/>
</dbReference>
<dbReference type="RefSeq" id="WP_010231100.1">
    <property type="nucleotide sequence ID" value="NZ_CP063055.1"/>
</dbReference>
<dbReference type="SMR" id="Q9PK26"/>
<dbReference type="GeneID" id="1246008"/>
<dbReference type="KEGG" id="cmu:TC_0647"/>
<dbReference type="eggNOG" id="COG0082">
    <property type="taxonomic scope" value="Bacteria"/>
</dbReference>
<dbReference type="HOGENOM" id="CLU_034547_0_0_0"/>
<dbReference type="OrthoDB" id="9771806at2"/>
<dbReference type="UniPathway" id="UPA00053">
    <property type="reaction ID" value="UER00090"/>
</dbReference>
<dbReference type="Proteomes" id="UP000000800">
    <property type="component" value="Chromosome"/>
</dbReference>
<dbReference type="GO" id="GO:0005829">
    <property type="term" value="C:cytosol"/>
    <property type="evidence" value="ECO:0007669"/>
    <property type="project" value="TreeGrafter"/>
</dbReference>
<dbReference type="GO" id="GO:0004107">
    <property type="term" value="F:chorismate synthase activity"/>
    <property type="evidence" value="ECO:0007669"/>
    <property type="project" value="UniProtKB-UniRule"/>
</dbReference>
<dbReference type="GO" id="GO:0010181">
    <property type="term" value="F:FMN binding"/>
    <property type="evidence" value="ECO:0007669"/>
    <property type="project" value="TreeGrafter"/>
</dbReference>
<dbReference type="GO" id="GO:0008652">
    <property type="term" value="P:amino acid biosynthetic process"/>
    <property type="evidence" value="ECO:0007669"/>
    <property type="project" value="UniProtKB-KW"/>
</dbReference>
<dbReference type="GO" id="GO:0009073">
    <property type="term" value="P:aromatic amino acid family biosynthetic process"/>
    <property type="evidence" value="ECO:0007669"/>
    <property type="project" value="UniProtKB-KW"/>
</dbReference>
<dbReference type="GO" id="GO:0009423">
    <property type="term" value="P:chorismate biosynthetic process"/>
    <property type="evidence" value="ECO:0007669"/>
    <property type="project" value="UniProtKB-UniRule"/>
</dbReference>
<dbReference type="CDD" id="cd07304">
    <property type="entry name" value="Chorismate_synthase"/>
    <property type="match status" value="1"/>
</dbReference>
<dbReference type="FunFam" id="3.60.150.10:FF:000002">
    <property type="entry name" value="Chorismate synthase"/>
    <property type="match status" value="1"/>
</dbReference>
<dbReference type="Gene3D" id="3.60.150.10">
    <property type="entry name" value="Chorismate synthase AroC"/>
    <property type="match status" value="1"/>
</dbReference>
<dbReference type="HAMAP" id="MF_00300">
    <property type="entry name" value="Chorismate_synth"/>
    <property type="match status" value="1"/>
</dbReference>
<dbReference type="InterPro" id="IPR000453">
    <property type="entry name" value="Chorismate_synth"/>
</dbReference>
<dbReference type="InterPro" id="IPR035904">
    <property type="entry name" value="Chorismate_synth_AroC_sf"/>
</dbReference>
<dbReference type="InterPro" id="IPR020541">
    <property type="entry name" value="Chorismate_synthase_CS"/>
</dbReference>
<dbReference type="NCBIfam" id="TIGR00033">
    <property type="entry name" value="aroC"/>
    <property type="match status" value="1"/>
</dbReference>
<dbReference type="NCBIfam" id="NF003793">
    <property type="entry name" value="PRK05382.1"/>
    <property type="match status" value="1"/>
</dbReference>
<dbReference type="PANTHER" id="PTHR21085">
    <property type="entry name" value="CHORISMATE SYNTHASE"/>
    <property type="match status" value="1"/>
</dbReference>
<dbReference type="PANTHER" id="PTHR21085:SF0">
    <property type="entry name" value="CHORISMATE SYNTHASE"/>
    <property type="match status" value="1"/>
</dbReference>
<dbReference type="Pfam" id="PF01264">
    <property type="entry name" value="Chorismate_synt"/>
    <property type="match status" value="1"/>
</dbReference>
<dbReference type="PIRSF" id="PIRSF001456">
    <property type="entry name" value="Chorismate_synth"/>
    <property type="match status" value="1"/>
</dbReference>
<dbReference type="SUPFAM" id="SSF103263">
    <property type="entry name" value="Chorismate synthase, AroC"/>
    <property type="match status" value="1"/>
</dbReference>
<dbReference type="PROSITE" id="PS00787">
    <property type="entry name" value="CHORISMATE_SYNTHASE_1"/>
    <property type="match status" value="1"/>
</dbReference>
<dbReference type="PROSITE" id="PS00788">
    <property type="entry name" value="CHORISMATE_SYNTHASE_2"/>
    <property type="match status" value="1"/>
</dbReference>
<dbReference type="PROSITE" id="PS00789">
    <property type="entry name" value="CHORISMATE_SYNTHASE_3"/>
    <property type="match status" value="1"/>
</dbReference>
<gene>
    <name evidence="1" type="primary">aroC</name>
    <name type="ordered locus">TC_0647</name>
</gene>
<name>AROC_CHLMU</name>
<sequence>MHNQYGSLFSITTWGESHGPSIGVVIDGCPAGLPLAPEDFLPAMKRRRPGQLHTSPRQETDSVTILSGVYQQKTTGTPISLLIQNEDASSTSYEQLNDCYRPGHAQFAYEGKYGFADNRGGGRSSARETAARVAAGVVAKKILSSQGIKTLAFLSGFGPLENKTYPKLTDPLIRKVYSSPFYTILSQEEIQNLLLHDPEDSFGGIVSFITSPLPIGLGEPVFGKLPALLAAGMMSIPATKGFEIGEGFASAHMTGSTYLDSFIAKEGEISFQTNRCGGTLGGISIGQPLEGRVAFKPTSSIRKPCPSVSKDGEPITYKTPKQGRHDPCVAIRAVTVVEAMLDLTLVDLLLQHRCAKL</sequence>
<accession>Q9PK26</accession>
<reference key="1">
    <citation type="journal article" date="2000" name="Nucleic Acids Res.">
        <title>Genome sequences of Chlamydia trachomatis MoPn and Chlamydia pneumoniae AR39.</title>
        <authorList>
            <person name="Read T.D."/>
            <person name="Brunham R.C."/>
            <person name="Shen C."/>
            <person name="Gill S.R."/>
            <person name="Heidelberg J.F."/>
            <person name="White O."/>
            <person name="Hickey E.K."/>
            <person name="Peterson J.D."/>
            <person name="Utterback T.R."/>
            <person name="Berry K.J."/>
            <person name="Bass S."/>
            <person name="Linher K.D."/>
            <person name="Weidman J.F."/>
            <person name="Khouri H.M."/>
            <person name="Craven B."/>
            <person name="Bowman C."/>
            <person name="Dodson R.J."/>
            <person name="Gwinn M.L."/>
            <person name="Nelson W.C."/>
            <person name="DeBoy R.T."/>
            <person name="Kolonay J.F."/>
            <person name="McClarty G."/>
            <person name="Salzberg S.L."/>
            <person name="Eisen J.A."/>
            <person name="Fraser C.M."/>
        </authorList>
    </citation>
    <scope>NUCLEOTIDE SEQUENCE [LARGE SCALE GENOMIC DNA]</scope>
    <source>
        <strain>MoPn / Nigg</strain>
    </source>
</reference>
<organism>
    <name type="scientific">Chlamydia muridarum (strain MoPn / Nigg)</name>
    <dbReference type="NCBI Taxonomy" id="243161"/>
    <lineage>
        <taxon>Bacteria</taxon>
        <taxon>Pseudomonadati</taxon>
        <taxon>Chlamydiota</taxon>
        <taxon>Chlamydiia</taxon>
        <taxon>Chlamydiales</taxon>
        <taxon>Chlamydiaceae</taxon>
        <taxon>Chlamydia/Chlamydophila group</taxon>
        <taxon>Chlamydia</taxon>
    </lineage>
</organism>
<keyword id="KW-0028">Amino-acid biosynthesis</keyword>
<keyword id="KW-0057">Aromatic amino acid biosynthesis</keyword>
<keyword id="KW-0274">FAD</keyword>
<keyword id="KW-0285">Flavoprotein</keyword>
<keyword id="KW-0288">FMN</keyword>
<keyword id="KW-0456">Lyase</keyword>
<keyword id="KW-0521">NADP</keyword>
<protein>
    <recommendedName>
        <fullName evidence="1">Chorismate synthase</fullName>
        <shortName evidence="1">CS</shortName>
        <ecNumber evidence="1">4.2.3.5</ecNumber>
    </recommendedName>
    <alternativeName>
        <fullName evidence="1">5-enolpyruvylshikimate-3-phosphate phospholyase</fullName>
    </alternativeName>
</protein>
<feature type="chain" id="PRO_0000140572" description="Chorismate synthase">
    <location>
        <begin position="1"/>
        <end position="357"/>
    </location>
</feature>
<feature type="binding site" evidence="1">
    <location>
        <position position="47"/>
    </location>
    <ligand>
        <name>NADP(+)</name>
        <dbReference type="ChEBI" id="CHEBI:58349"/>
    </ligand>
</feature>
<feature type="binding site" evidence="1">
    <location>
        <begin position="123"/>
        <end position="125"/>
    </location>
    <ligand>
        <name>FMN</name>
        <dbReference type="ChEBI" id="CHEBI:58210"/>
    </ligand>
</feature>
<feature type="binding site" evidence="1">
    <location>
        <position position="281"/>
    </location>
    <ligand>
        <name>FMN</name>
        <dbReference type="ChEBI" id="CHEBI:58210"/>
    </ligand>
</feature>
<feature type="binding site" evidence="1">
    <location>
        <begin position="296"/>
        <end position="300"/>
    </location>
    <ligand>
        <name>FMN</name>
        <dbReference type="ChEBI" id="CHEBI:58210"/>
    </ligand>
</feature>
<feature type="binding site" evidence="1">
    <location>
        <position position="324"/>
    </location>
    <ligand>
        <name>FMN</name>
        <dbReference type="ChEBI" id="CHEBI:58210"/>
    </ligand>
</feature>
<evidence type="ECO:0000255" key="1">
    <source>
        <dbReference type="HAMAP-Rule" id="MF_00300"/>
    </source>
</evidence>
<comment type="function">
    <text evidence="1">Catalyzes the anti-1,4-elimination of the C-3 phosphate and the C-6 proR hydrogen from 5-enolpyruvylshikimate-3-phosphate (EPSP) to yield chorismate, which is the branch point compound that serves as the starting substrate for the three terminal pathways of aromatic amino acid biosynthesis. This reaction introduces a second double bond into the aromatic ring system.</text>
</comment>
<comment type="catalytic activity">
    <reaction evidence="1">
        <text>5-O-(1-carboxyvinyl)-3-phosphoshikimate = chorismate + phosphate</text>
        <dbReference type="Rhea" id="RHEA:21020"/>
        <dbReference type="ChEBI" id="CHEBI:29748"/>
        <dbReference type="ChEBI" id="CHEBI:43474"/>
        <dbReference type="ChEBI" id="CHEBI:57701"/>
        <dbReference type="EC" id="4.2.3.5"/>
    </reaction>
</comment>
<comment type="cofactor">
    <cofactor evidence="1">
        <name>FMNH2</name>
        <dbReference type="ChEBI" id="CHEBI:57618"/>
    </cofactor>
    <text evidence="1">Reduced FMN (FMNH(2)).</text>
</comment>
<comment type="pathway">
    <text evidence="1">Metabolic intermediate biosynthesis; chorismate biosynthesis; chorismate from D-erythrose 4-phosphate and phosphoenolpyruvate: step 7/7.</text>
</comment>
<comment type="subunit">
    <text evidence="1">Homotetramer.</text>
</comment>
<comment type="similarity">
    <text evidence="1">Belongs to the chorismate synthase family.</text>
</comment>